<keyword id="KW-0025">Alternative splicing</keyword>
<keyword id="KW-0150">Chloroplast</keyword>
<keyword id="KW-1015">Disulfide bond</keyword>
<keyword id="KW-0249">Electron transport</keyword>
<keyword id="KW-0934">Plastid</keyword>
<keyword id="KW-0676">Redox-active center</keyword>
<keyword id="KW-1185">Reference proteome</keyword>
<keyword id="KW-0809">Transit peptide</keyword>
<keyword id="KW-0813">Transport</keyword>
<proteinExistence type="evidence at transcript level"/>
<name>TRL4_ARATH</name>
<dbReference type="EMBL" id="AC007583">
    <property type="protein sequence ID" value="AAF75085.1"/>
    <property type="status" value="ALT_SEQ"/>
    <property type="molecule type" value="Genomic_DNA"/>
</dbReference>
<dbReference type="EMBL" id="CP002684">
    <property type="protein sequence ID" value="AEE28163.2"/>
    <property type="molecule type" value="Genomic_DNA"/>
</dbReference>
<dbReference type="EMBL" id="CP002684">
    <property type="protein sequence ID" value="AEE28164.1"/>
    <property type="molecule type" value="Genomic_DNA"/>
</dbReference>
<dbReference type="EMBL" id="CP002684">
    <property type="protein sequence ID" value="AEE28165.1"/>
    <property type="molecule type" value="Genomic_DNA"/>
</dbReference>
<dbReference type="EMBL" id="CP002684">
    <property type="protein sequence ID" value="ANM59501.1"/>
    <property type="molecule type" value="Genomic_DNA"/>
</dbReference>
<dbReference type="EMBL" id="AF360345">
    <property type="protein sequence ID" value="AAK28642.1"/>
    <property type="molecule type" value="mRNA"/>
</dbReference>
<dbReference type="EMBL" id="AY051082">
    <property type="protein sequence ID" value="AAK93759.1"/>
    <property type="molecule type" value="mRNA"/>
</dbReference>
<dbReference type="EMBL" id="BX815031">
    <property type="status" value="NOT_ANNOTATED_CDS"/>
    <property type="molecule type" value="mRNA"/>
</dbReference>
<dbReference type="EMBL" id="BX816726">
    <property type="status" value="NOT_ANNOTATED_CDS"/>
    <property type="molecule type" value="mRNA"/>
</dbReference>
<dbReference type="EMBL" id="AK229680">
    <property type="protein sequence ID" value="BAF01521.1"/>
    <property type="molecule type" value="mRNA"/>
</dbReference>
<dbReference type="PIR" id="A86212">
    <property type="entry name" value="A86212"/>
</dbReference>
<dbReference type="RefSeq" id="NP_001318945.1">
    <molecule id="Q9C5C5-1"/>
    <property type="nucleotide sequence ID" value="NM_001331721.1"/>
</dbReference>
<dbReference type="RefSeq" id="NP_001321855.1">
    <molecule id="Q9C5C5-1"/>
    <property type="nucleotide sequence ID" value="NM_001331722.1"/>
</dbReference>
<dbReference type="RefSeq" id="NP_563794.1">
    <molecule id="Q9C5C5-1"/>
    <property type="nucleotide sequence ID" value="NM_100643.4"/>
</dbReference>
<dbReference type="RefSeq" id="NP_973781.1">
    <molecule id="Q9C5C5-2"/>
    <property type="nucleotide sequence ID" value="NM_202052.2"/>
</dbReference>
<dbReference type="SMR" id="Q9C5C5"/>
<dbReference type="FunCoup" id="Q9C5C5">
    <property type="interactions" value="754"/>
</dbReference>
<dbReference type="STRING" id="3702.Q9C5C5"/>
<dbReference type="PaxDb" id="3702-AT1G07700.3"/>
<dbReference type="ProteomicsDB" id="245238">
    <molecule id="Q9C5C5-1"/>
</dbReference>
<dbReference type="EnsemblPlants" id="AT1G07700.1">
    <molecule id="Q9C5C5-1"/>
    <property type="protein sequence ID" value="AT1G07700.1"/>
    <property type="gene ID" value="AT1G07700"/>
</dbReference>
<dbReference type="EnsemblPlants" id="AT1G07700.2">
    <molecule id="Q9C5C5-1"/>
    <property type="protein sequence ID" value="AT1G07700.2"/>
    <property type="gene ID" value="AT1G07700"/>
</dbReference>
<dbReference type="EnsemblPlants" id="AT1G07700.3">
    <molecule id="Q9C5C5-2"/>
    <property type="protein sequence ID" value="AT1G07700.3"/>
    <property type="gene ID" value="AT1G07700"/>
</dbReference>
<dbReference type="EnsemblPlants" id="AT1G07700.4">
    <molecule id="Q9C5C5-1"/>
    <property type="protein sequence ID" value="AT1G07700.4"/>
    <property type="gene ID" value="AT1G07700"/>
</dbReference>
<dbReference type="GeneID" id="837283"/>
<dbReference type="Gramene" id="AT1G07700.1">
    <molecule id="Q9C5C5-1"/>
    <property type="protein sequence ID" value="AT1G07700.1"/>
    <property type="gene ID" value="AT1G07700"/>
</dbReference>
<dbReference type="Gramene" id="AT1G07700.2">
    <molecule id="Q9C5C5-1"/>
    <property type="protein sequence ID" value="AT1G07700.2"/>
    <property type="gene ID" value="AT1G07700"/>
</dbReference>
<dbReference type="Gramene" id="AT1G07700.3">
    <molecule id="Q9C5C5-2"/>
    <property type="protein sequence ID" value="AT1G07700.3"/>
    <property type="gene ID" value="AT1G07700"/>
</dbReference>
<dbReference type="Gramene" id="AT1G07700.4">
    <molecule id="Q9C5C5-1"/>
    <property type="protein sequence ID" value="AT1G07700.4"/>
    <property type="gene ID" value="AT1G07700"/>
</dbReference>
<dbReference type="KEGG" id="ath:AT1G07700"/>
<dbReference type="Araport" id="AT1G07700"/>
<dbReference type="TAIR" id="AT1G07700"/>
<dbReference type="eggNOG" id="KOG2151">
    <property type="taxonomic scope" value="Eukaryota"/>
</dbReference>
<dbReference type="HOGENOM" id="CLU_097713_1_0_1"/>
<dbReference type="InParanoid" id="Q9C5C5"/>
<dbReference type="OMA" id="FIRLCKG"/>
<dbReference type="PhylomeDB" id="Q9C5C5"/>
<dbReference type="PRO" id="PR:Q9C5C5"/>
<dbReference type="Proteomes" id="UP000006548">
    <property type="component" value="Chromosome 1"/>
</dbReference>
<dbReference type="ExpressionAtlas" id="Q9C5C5">
    <property type="expression patterns" value="baseline and differential"/>
</dbReference>
<dbReference type="GO" id="GO:0009507">
    <property type="term" value="C:chloroplast"/>
    <property type="evidence" value="ECO:0007005"/>
    <property type="project" value="TAIR"/>
</dbReference>
<dbReference type="GO" id="GO:0009570">
    <property type="term" value="C:chloroplast stroma"/>
    <property type="evidence" value="ECO:0007005"/>
    <property type="project" value="TAIR"/>
</dbReference>
<dbReference type="CDD" id="cd02947">
    <property type="entry name" value="TRX_family"/>
    <property type="match status" value="1"/>
</dbReference>
<dbReference type="FunFam" id="3.40.30.10:FF:000234">
    <property type="entry name" value="Thioredoxin-like 4, chloroplastic"/>
    <property type="match status" value="1"/>
</dbReference>
<dbReference type="Gene3D" id="3.40.30.10">
    <property type="entry name" value="Glutaredoxin"/>
    <property type="match status" value="1"/>
</dbReference>
<dbReference type="InterPro" id="IPR036249">
    <property type="entry name" value="Thioredoxin-like_sf"/>
</dbReference>
<dbReference type="InterPro" id="IPR013766">
    <property type="entry name" value="Thioredoxin_domain"/>
</dbReference>
<dbReference type="InterPro" id="IPR044176">
    <property type="entry name" value="TRL4_chloroplastic"/>
</dbReference>
<dbReference type="PANTHER" id="PTHR47912">
    <property type="entry name" value="THIOREDOXIN-LIKE 4, CHLOROPLASTIC"/>
    <property type="match status" value="1"/>
</dbReference>
<dbReference type="PANTHER" id="PTHR47912:SF1">
    <property type="entry name" value="THIOREDOXIN-LIKE 4, CHLOROPLASTIC"/>
    <property type="match status" value="1"/>
</dbReference>
<dbReference type="Pfam" id="PF00085">
    <property type="entry name" value="Thioredoxin"/>
    <property type="match status" value="1"/>
</dbReference>
<dbReference type="SUPFAM" id="SSF52833">
    <property type="entry name" value="Thioredoxin-like"/>
    <property type="match status" value="1"/>
</dbReference>
<dbReference type="PROSITE" id="PS51352">
    <property type="entry name" value="THIOREDOXIN_2"/>
    <property type="match status" value="1"/>
</dbReference>
<gene>
    <name type="ordered locus">At1g07700</name>
    <name type="ORF">F24B9.21</name>
</gene>
<accession>Q9C5C5</accession>
<accession>Q3EDG8</accession>
<accession>Q3EDG9</accession>
<accession>Q9LQP5</accession>
<organism>
    <name type="scientific">Arabidopsis thaliana</name>
    <name type="common">Mouse-ear cress</name>
    <dbReference type="NCBI Taxonomy" id="3702"/>
    <lineage>
        <taxon>Eukaryota</taxon>
        <taxon>Viridiplantae</taxon>
        <taxon>Streptophyta</taxon>
        <taxon>Embryophyta</taxon>
        <taxon>Tracheophyta</taxon>
        <taxon>Spermatophyta</taxon>
        <taxon>Magnoliopsida</taxon>
        <taxon>eudicotyledons</taxon>
        <taxon>Gunneridae</taxon>
        <taxon>Pentapetalae</taxon>
        <taxon>rosids</taxon>
        <taxon>malvids</taxon>
        <taxon>Brassicales</taxon>
        <taxon>Brassicaceae</taxon>
        <taxon>Camelineae</taxon>
        <taxon>Arabidopsis</taxon>
    </lineage>
</organism>
<protein>
    <recommendedName>
        <fullName>Thioredoxin-like 4, chloroplastic</fullName>
    </recommendedName>
    <alternativeName>
        <fullName>Lilium-type thioredoxin 3</fullName>
    </alternativeName>
</protein>
<feature type="transit peptide" description="Chloroplast" evidence="1">
    <location>
        <begin position="1"/>
        <end position="27"/>
    </location>
</feature>
<feature type="chain" id="PRO_0000394542" description="Thioredoxin-like 4, chloroplastic">
    <location>
        <begin position="28"/>
        <end position="204"/>
    </location>
</feature>
<feature type="domain" description="Thioredoxin" evidence="2">
    <location>
        <begin position="63"/>
        <end position="201"/>
    </location>
</feature>
<feature type="active site" description="Nucleophile" evidence="1">
    <location>
        <position position="119"/>
    </location>
</feature>
<feature type="active site" description="Nucleophile" evidence="1">
    <location>
        <position position="122"/>
    </location>
</feature>
<feature type="disulfide bond" description="Redox-active" evidence="2">
    <location>
        <begin position="119"/>
        <end position="122"/>
    </location>
</feature>
<feature type="splice variant" id="VSP_039284" description="In isoform 2." evidence="3">
    <original>MSSLLN</original>
    <variation>MTPLLWFCFKILIFDSNLQ</variation>
    <location>
        <begin position="1"/>
        <end position="6"/>
    </location>
</feature>
<feature type="splice variant" id="VSP_039285" description="In isoform 3." evidence="3">
    <original>AVPL</original>
    <variation>VIPL</variation>
    <location>
        <begin position="168"/>
        <end position="171"/>
    </location>
</feature>
<feature type="splice variant" id="VSP_039286" description="In isoform 3." evidence="3">
    <location>
        <begin position="172"/>
        <end position="204"/>
    </location>
</feature>
<evidence type="ECO:0000255" key="1"/>
<evidence type="ECO:0000255" key="2">
    <source>
        <dbReference type="PROSITE-ProRule" id="PRU00691"/>
    </source>
</evidence>
<evidence type="ECO:0000303" key="3">
    <source>
    </source>
</evidence>
<evidence type="ECO:0000305" key="4"/>
<reference key="1">
    <citation type="journal article" date="2000" name="Nature">
        <title>Sequence and analysis of chromosome 1 of the plant Arabidopsis thaliana.</title>
        <authorList>
            <person name="Theologis A."/>
            <person name="Ecker J.R."/>
            <person name="Palm C.J."/>
            <person name="Federspiel N.A."/>
            <person name="Kaul S."/>
            <person name="White O."/>
            <person name="Alonso J."/>
            <person name="Altafi H."/>
            <person name="Araujo R."/>
            <person name="Bowman C.L."/>
            <person name="Brooks S.Y."/>
            <person name="Buehler E."/>
            <person name="Chan A."/>
            <person name="Chao Q."/>
            <person name="Chen H."/>
            <person name="Cheuk R.F."/>
            <person name="Chin C.W."/>
            <person name="Chung M.K."/>
            <person name="Conn L."/>
            <person name="Conway A.B."/>
            <person name="Conway A.R."/>
            <person name="Creasy T.H."/>
            <person name="Dewar K."/>
            <person name="Dunn P."/>
            <person name="Etgu P."/>
            <person name="Feldblyum T.V."/>
            <person name="Feng J.-D."/>
            <person name="Fong B."/>
            <person name="Fujii C.Y."/>
            <person name="Gill J.E."/>
            <person name="Goldsmith A.D."/>
            <person name="Haas B."/>
            <person name="Hansen N.F."/>
            <person name="Hughes B."/>
            <person name="Huizar L."/>
            <person name="Hunter J.L."/>
            <person name="Jenkins J."/>
            <person name="Johnson-Hopson C."/>
            <person name="Khan S."/>
            <person name="Khaykin E."/>
            <person name="Kim C.J."/>
            <person name="Koo H.L."/>
            <person name="Kremenetskaia I."/>
            <person name="Kurtz D.B."/>
            <person name="Kwan A."/>
            <person name="Lam B."/>
            <person name="Langin-Hooper S."/>
            <person name="Lee A."/>
            <person name="Lee J.M."/>
            <person name="Lenz C.A."/>
            <person name="Li J.H."/>
            <person name="Li Y.-P."/>
            <person name="Lin X."/>
            <person name="Liu S.X."/>
            <person name="Liu Z.A."/>
            <person name="Luros J.S."/>
            <person name="Maiti R."/>
            <person name="Marziali A."/>
            <person name="Militscher J."/>
            <person name="Miranda M."/>
            <person name="Nguyen M."/>
            <person name="Nierman W.C."/>
            <person name="Osborne B.I."/>
            <person name="Pai G."/>
            <person name="Peterson J."/>
            <person name="Pham P.K."/>
            <person name="Rizzo M."/>
            <person name="Rooney T."/>
            <person name="Rowley D."/>
            <person name="Sakano H."/>
            <person name="Salzberg S.L."/>
            <person name="Schwartz J.R."/>
            <person name="Shinn P."/>
            <person name="Southwick A.M."/>
            <person name="Sun H."/>
            <person name="Tallon L.J."/>
            <person name="Tambunga G."/>
            <person name="Toriumi M.J."/>
            <person name="Town C.D."/>
            <person name="Utterback T."/>
            <person name="Van Aken S."/>
            <person name="Vaysberg M."/>
            <person name="Vysotskaia V.S."/>
            <person name="Walker M."/>
            <person name="Wu D."/>
            <person name="Yu G."/>
            <person name="Fraser C.M."/>
            <person name="Venter J.C."/>
            <person name="Davis R.W."/>
        </authorList>
    </citation>
    <scope>NUCLEOTIDE SEQUENCE [LARGE SCALE GENOMIC DNA]</scope>
    <source>
        <strain>cv. Columbia</strain>
    </source>
</reference>
<reference key="2">
    <citation type="journal article" date="2017" name="Plant J.">
        <title>Araport11: a complete reannotation of the Arabidopsis thaliana reference genome.</title>
        <authorList>
            <person name="Cheng C.Y."/>
            <person name="Krishnakumar V."/>
            <person name="Chan A.P."/>
            <person name="Thibaud-Nissen F."/>
            <person name="Schobel S."/>
            <person name="Town C.D."/>
        </authorList>
    </citation>
    <scope>GENOME REANNOTATION</scope>
    <source>
        <strain>cv. Columbia</strain>
    </source>
</reference>
<reference key="3">
    <citation type="journal article" date="2003" name="Science">
        <title>Empirical analysis of transcriptional activity in the Arabidopsis genome.</title>
        <authorList>
            <person name="Yamada K."/>
            <person name="Lim J."/>
            <person name="Dale J.M."/>
            <person name="Chen H."/>
            <person name="Shinn P."/>
            <person name="Palm C.J."/>
            <person name="Southwick A.M."/>
            <person name="Wu H.C."/>
            <person name="Kim C.J."/>
            <person name="Nguyen M."/>
            <person name="Pham P.K."/>
            <person name="Cheuk R.F."/>
            <person name="Karlin-Newmann G."/>
            <person name="Liu S.X."/>
            <person name="Lam B."/>
            <person name="Sakano H."/>
            <person name="Wu T."/>
            <person name="Yu G."/>
            <person name="Miranda M."/>
            <person name="Quach H.L."/>
            <person name="Tripp M."/>
            <person name="Chang C.H."/>
            <person name="Lee J.M."/>
            <person name="Toriumi M.J."/>
            <person name="Chan M.M."/>
            <person name="Tang C.C."/>
            <person name="Onodera C.S."/>
            <person name="Deng J.M."/>
            <person name="Akiyama K."/>
            <person name="Ansari Y."/>
            <person name="Arakawa T."/>
            <person name="Banh J."/>
            <person name="Banno F."/>
            <person name="Bowser L."/>
            <person name="Brooks S.Y."/>
            <person name="Carninci P."/>
            <person name="Chao Q."/>
            <person name="Choy N."/>
            <person name="Enju A."/>
            <person name="Goldsmith A.D."/>
            <person name="Gurjal M."/>
            <person name="Hansen N.F."/>
            <person name="Hayashizaki Y."/>
            <person name="Johnson-Hopson C."/>
            <person name="Hsuan V.W."/>
            <person name="Iida K."/>
            <person name="Karnes M."/>
            <person name="Khan S."/>
            <person name="Koesema E."/>
            <person name="Ishida J."/>
            <person name="Jiang P.X."/>
            <person name="Jones T."/>
            <person name="Kawai J."/>
            <person name="Kamiya A."/>
            <person name="Meyers C."/>
            <person name="Nakajima M."/>
            <person name="Narusaka M."/>
            <person name="Seki M."/>
            <person name="Sakurai T."/>
            <person name="Satou M."/>
            <person name="Tamse R."/>
            <person name="Vaysberg M."/>
            <person name="Wallender E.K."/>
            <person name="Wong C."/>
            <person name="Yamamura Y."/>
            <person name="Yuan S."/>
            <person name="Shinozaki K."/>
            <person name="Davis R.W."/>
            <person name="Theologis A."/>
            <person name="Ecker J.R."/>
        </authorList>
    </citation>
    <scope>NUCLEOTIDE SEQUENCE [LARGE SCALE MRNA] (ISOFORM 1)</scope>
    <source>
        <strain>cv. Columbia</strain>
    </source>
</reference>
<reference key="4">
    <citation type="journal article" date="2004" name="Genome Res.">
        <title>Whole genome sequence comparisons and 'full-length' cDNA sequences: a combined approach to evaluate and improve Arabidopsis genome annotation.</title>
        <authorList>
            <person name="Castelli V."/>
            <person name="Aury J.-M."/>
            <person name="Jaillon O."/>
            <person name="Wincker P."/>
            <person name="Clepet C."/>
            <person name="Menard M."/>
            <person name="Cruaud C."/>
            <person name="Quetier F."/>
            <person name="Scarpelli C."/>
            <person name="Schaechter V."/>
            <person name="Temple G."/>
            <person name="Caboche M."/>
            <person name="Weissenbach J."/>
            <person name="Salanoubat M."/>
        </authorList>
    </citation>
    <scope>NUCLEOTIDE SEQUENCE [LARGE SCALE MRNA] (ISOFORMS 2 AND 3)</scope>
    <source>
        <strain>cv. Columbia</strain>
    </source>
</reference>
<reference key="5">
    <citation type="submission" date="2006-07" db="EMBL/GenBank/DDBJ databases">
        <title>Large-scale analysis of RIKEN Arabidopsis full-length (RAFL) cDNAs.</title>
        <authorList>
            <person name="Totoki Y."/>
            <person name="Seki M."/>
            <person name="Ishida J."/>
            <person name="Nakajima M."/>
            <person name="Enju A."/>
            <person name="Kamiya A."/>
            <person name="Narusaka M."/>
            <person name="Shin-i T."/>
            <person name="Nakagawa M."/>
            <person name="Sakamoto N."/>
            <person name="Oishi K."/>
            <person name="Kohara Y."/>
            <person name="Kobayashi M."/>
            <person name="Toyoda A."/>
            <person name="Sakaki Y."/>
            <person name="Sakurai T."/>
            <person name="Iida K."/>
            <person name="Akiyama K."/>
            <person name="Satou M."/>
            <person name="Toyoda T."/>
            <person name="Konagaya A."/>
            <person name="Carninci P."/>
            <person name="Kawai J."/>
            <person name="Hayashizaki Y."/>
            <person name="Shinozaki K."/>
        </authorList>
    </citation>
    <scope>NUCLEOTIDE SEQUENCE [LARGE SCALE MRNA] (ISOFORM 1)</scope>
    <source>
        <strain>cv. Columbia</strain>
    </source>
</reference>
<reference key="6">
    <citation type="journal article" date="2009" name="Mol. Plant">
        <title>Comparative genomic study of the thioredoxin family in photosynthetic organisms with emphasis on Populus trichocarpa.</title>
        <authorList>
            <person name="Chibani K."/>
            <person name="Wingsle G."/>
            <person name="Jacquot J.P."/>
            <person name="Gelhaye E."/>
            <person name="Rouhier N."/>
        </authorList>
    </citation>
    <scope>GENE FAMILY</scope>
    <scope>NOMENCLATURE</scope>
</reference>
<sequence>MSSLLNISHCSYHGYSGLTSRGGINTVENHRWVWHNNGVRLSFPRAESSINITMGCTLQRGIAKSLSQENLVELSDENDDLCPVECVTEFKTDDELLSVLEKSKETNSLVVVDFYRTACGSCKYIEQGFSKLCKQSGDQEAPVIFLKHNVVDEYDEQSEVAERLRIKAVPLFHFYKNGVLLESFATRDKERIDAAILKYTSSES</sequence>
<comment type="function">
    <text>Probable thiol-disulfide oxidoreductase that may participate in various redox reactions.</text>
</comment>
<comment type="subcellular location">
    <subcellularLocation>
        <location>Plastid</location>
        <location>Chloroplast</location>
    </subcellularLocation>
</comment>
<comment type="alternative products">
    <event type="alternative splicing"/>
    <isoform>
        <id>Q9C5C5-1</id>
        <name>1</name>
        <sequence type="displayed"/>
    </isoform>
    <isoform>
        <id>Q9C5C5-2</id>
        <name>2</name>
        <sequence type="described" ref="VSP_039284"/>
    </isoform>
    <isoform>
        <id>Q9C5C5-3</id>
        <name>3</name>
        <sequence type="described" ref="VSP_039285 VSP_039286"/>
    </isoform>
</comment>
<comment type="similarity">
    <text evidence="4">Belongs to the thioredoxin family.</text>
</comment>
<comment type="caution">
    <text evidence="4">The active site contains a CGSC motif which differs from the conserved CGPC motif.</text>
</comment>
<comment type="sequence caution" evidence="4">
    <conflict type="erroneous gene model prediction">
        <sequence resource="EMBL-CDS" id="AAF75085"/>
    </conflict>
</comment>
<comment type="sequence caution" evidence="4">
    <conflict type="miscellaneous discrepancy">
        <sequence resource="EMBL" id="BX815031"/>
    </conflict>
    <text>Sequencing errors.</text>
</comment>
<comment type="sequence caution" evidence="4">
    <conflict type="miscellaneous discrepancy">
        <sequence resource="EMBL" id="BX816726"/>
    </conflict>
    <text>Sequencing errors.</text>
</comment>